<reference key="1">
    <citation type="journal article" date="2004" name="Science">
        <title>The complete genome sequence of Propionibacterium acnes, a commensal of human skin.</title>
        <authorList>
            <person name="Brueggemann H."/>
            <person name="Henne A."/>
            <person name="Hoster F."/>
            <person name="Liesegang H."/>
            <person name="Wiezer A."/>
            <person name="Strittmatter A."/>
            <person name="Hujer S."/>
            <person name="Duerre P."/>
            <person name="Gottschalk G."/>
        </authorList>
    </citation>
    <scope>NUCLEOTIDE SEQUENCE [LARGE SCALE GENOMIC DNA]</scope>
    <source>
        <strain>DSM 16379 / KPA171202</strain>
    </source>
</reference>
<feature type="chain" id="PRO_0000334067" description="Cell division protein SepF">
    <location>
        <begin position="1"/>
        <end position="172"/>
    </location>
</feature>
<feature type="region of interest" description="Disordered" evidence="2">
    <location>
        <begin position="18"/>
        <end position="73"/>
    </location>
</feature>
<feature type="compositionally biased region" description="Acidic residues" evidence="2">
    <location>
        <begin position="22"/>
        <end position="40"/>
    </location>
</feature>
<feature type="compositionally biased region" description="Basic and acidic residues" evidence="2">
    <location>
        <begin position="48"/>
        <end position="59"/>
    </location>
</feature>
<feature type="compositionally biased region" description="Basic residues" evidence="2">
    <location>
        <begin position="60"/>
        <end position="70"/>
    </location>
</feature>
<proteinExistence type="inferred from homology"/>
<gene>
    <name evidence="1" type="primary">sepF</name>
    <name type="ordered locus">PPA0763</name>
</gene>
<protein>
    <recommendedName>
        <fullName evidence="1">Cell division protein SepF</fullName>
    </recommendedName>
</protein>
<accession>Q6A9P7</accession>
<name>SEPF_CUTAK</name>
<dbReference type="EMBL" id="AE017283">
    <property type="protein sequence ID" value="AAT82519.1"/>
    <property type="molecule type" value="Genomic_DNA"/>
</dbReference>
<dbReference type="RefSeq" id="WP_002530972.1">
    <property type="nucleotide sequence ID" value="NZ_CP025935.1"/>
</dbReference>
<dbReference type="SMR" id="Q6A9P7"/>
<dbReference type="EnsemblBacteria" id="AAT82519">
    <property type="protein sequence ID" value="AAT82519"/>
    <property type="gene ID" value="PPA0763"/>
</dbReference>
<dbReference type="KEGG" id="pac:PPA0763"/>
<dbReference type="PATRIC" id="fig|267747.3.peg.800"/>
<dbReference type="eggNOG" id="COG1799">
    <property type="taxonomic scope" value="Bacteria"/>
</dbReference>
<dbReference type="HOGENOM" id="CLU_078499_0_0_11"/>
<dbReference type="Proteomes" id="UP000000603">
    <property type="component" value="Chromosome"/>
</dbReference>
<dbReference type="GO" id="GO:0005737">
    <property type="term" value="C:cytoplasm"/>
    <property type="evidence" value="ECO:0007669"/>
    <property type="project" value="UniProtKB-SubCell"/>
</dbReference>
<dbReference type="GO" id="GO:0000917">
    <property type="term" value="P:division septum assembly"/>
    <property type="evidence" value="ECO:0007669"/>
    <property type="project" value="UniProtKB-KW"/>
</dbReference>
<dbReference type="GO" id="GO:0043093">
    <property type="term" value="P:FtsZ-dependent cytokinesis"/>
    <property type="evidence" value="ECO:0007669"/>
    <property type="project" value="UniProtKB-UniRule"/>
</dbReference>
<dbReference type="Gene3D" id="3.30.110.150">
    <property type="entry name" value="SepF-like protein"/>
    <property type="match status" value="1"/>
</dbReference>
<dbReference type="HAMAP" id="MF_01197">
    <property type="entry name" value="SepF"/>
    <property type="match status" value="1"/>
</dbReference>
<dbReference type="InterPro" id="IPR023052">
    <property type="entry name" value="Cell_div_SepF"/>
</dbReference>
<dbReference type="InterPro" id="IPR007561">
    <property type="entry name" value="Cell_div_SepF/SepF-rel"/>
</dbReference>
<dbReference type="InterPro" id="IPR038594">
    <property type="entry name" value="SepF-like_sf"/>
</dbReference>
<dbReference type="PANTHER" id="PTHR35798">
    <property type="entry name" value="CELL DIVISION PROTEIN SEPF"/>
    <property type="match status" value="1"/>
</dbReference>
<dbReference type="PANTHER" id="PTHR35798:SF1">
    <property type="entry name" value="CELL DIVISION PROTEIN SEPF"/>
    <property type="match status" value="1"/>
</dbReference>
<dbReference type="Pfam" id="PF04472">
    <property type="entry name" value="SepF"/>
    <property type="match status" value="1"/>
</dbReference>
<evidence type="ECO:0000255" key="1">
    <source>
        <dbReference type="HAMAP-Rule" id="MF_01197"/>
    </source>
</evidence>
<evidence type="ECO:0000256" key="2">
    <source>
        <dbReference type="SAM" id="MobiDB-lite"/>
    </source>
</evidence>
<keyword id="KW-0131">Cell cycle</keyword>
<keyword id="KW-0132">Cell division</keyword>
<keyword id="KW-0963">Cytoplasm</keyword>
<keyword id="KW-0717">Septation</keyword>
<comment type="function">
    <text evidence="1">Cell division protein that is part of the divisome complex and is recruited early to the Z-ring. Probably stimulates Z-ring formation, perhaps through the cross-linking of FtsZ protofilaments. Its function overlaps with FtsA.</text>
</comment>
<comment type="subunit">
    <text evidence="1">Homodimer. Interacts with FtsZ.</text>
</comment>
<comment type="subcellular location">
    <subcellularLocation>
        <location evidence="1">Cytoplasm</location>
    </subcellularLocation>
    <text evidence="1">Localizes to the division site, in a FtsZ-dependent manner.</text>
</comment>
<comment type="similarity">
    <text evidence="1">Belongs to the SepF family.</text>
</comment>
<organism>
    <name type="scientific">Cutibacterium acnes (strain DSM 16379 / KPA171202)</name>
    <name type="common">Propionibacterium acnes</name>
    <dbReference type="NCBI Taxonomy" id="267747"/>
    <lineage>
        <taxon>Bacteria</taxon>
        <taxon>Bacillati</taxon>
        <taxon>Actinomycetota</taxon>
        <taxon>Actinomycetes</taxon>
        <taxon>Propionibacteriales</taxon>
        <taxon>Propionibacteriaceae</taxon>
        <taxon>Cutibacterium</taxon>
    </lineage>
</organism>
<sequence length="172" mass="19464">MAGIGRKIASYVGIVDDRRYDEEDLPDEELTTEVYSDDGYEPSSEVTQLHHHDSNEQHARGHKAVQHRRRSELEEPSIADINRILTVHPRNYNEARTIGEQFREGIPVIMNLTEMDDADAKRLVDFAAGLIFGLRGTIERVTSKVFLLCPRNVNVTPEDKARIASGGFFNQS</sequence>